<name>MRAY_STRPI</name>
<organism>
    <name type="scientific">Streptococcus pneumoniae (strain Hungary19A-6)</name>
    <dbReference type="NCBI Taxonomy" id="487214"/>
    <lineage>
        <taxon>Bacteria</taxon>
        <taxon>Bacillati</taxon>
        <taxon>Bacillota</taxon>
        <taxon>Bacilli</taxon>
        <taxon>Lactobacillales</taxon>
        <taxon>Streptococcaceae</taxon>
        <taxon>Streptococcus</taxon>
    </lineage>
</organism>
<accession>B1I956</accession>
<keyword id="KW-0131">Cell cycle</keyword>
<keyword id="KW-0132">Cell division</keyword>
<keyword id="KW-1003">Cell membrane</keyword>
<keyword id="KW-0133">Cell shape</keyword>
<keyword id="KW-0961">Cell wall biogenesis/degradation</keyword>
<keyword id="KW-0460">Magnesium</keyword>
<keyword id="KW-0472">Membrane</keyword>
<keyword id="KW-0479">Metal-binding</keyword>
<keyword id="KW-0573">Peptidoglycan synthesis</keyword>
<keyword id="KW-0808">Transferase</keyword>
<keyword id="KW-0812">Transmembrane</keyword>
<keyword id="KW-1133">Transmembrane helix</keyword>
<comment type="function">
    <text evidence="1">Catalyzes the initial step of the lipid cycle reactions in the biosynthesis of the cell wall peptidoglycan: transfers peptidoglycan precursor phospho-MurNAc-pentapeptide from UDP-MurNAc-pentapeptide onto the lipid carrier undecaprenyl phosphate, yielding undecaprenyl-pyrophosphoryl-MurNAc-pentapeptide, known as lipid I.</text>
</comment>
<comment type="catalytic activity">
    <reaction evidence="1">
        <text>UDP-N-acetyl-alpha-D-muramoyl-L-alanyl-gamma-D-glutamyl-L-lysyl-D-alanyl-D-alanine + di-trans,octa-cis-undecaprenyl phosphate = Mur2Ac(oyl-L-Ala-gamma-D-Glu-L-Lys-D-Ala-D-Ala)-di-trans,octa-cis-undecaprenyl diphosphate + UMP</text>
        <dbReference type="Rhea" id="RHEA:21920"/>
        <dbReference type="ChEBI" id="CHEBI:57865"/>
        <dbReference type="ChEBI" id="CHEBI:60032"/>
        <dbReference type="ChEBI" id="CHEBI:60392"/>
        <dbReference type="ChEBI" id="CHEBI:70758"/>
        <dbReference type="EC" id="2.7.8.13"/>
    </reaction>
</comment>
<comment type="cofactor">
    <cofactor evidence="1">
        <name>Mg(2+)</name>
        <dbReference type="ChEBI" id="CHEBI:18420"/>
    </cofactor>
</comment>
<comment type="pathway">
    <text evidence="1">Cell wall biogenesis; peptidoglycan biosynthesis.</text>
</comment>
<comment type="subcellular location">
    <subcellularLocation>
        <location evidence="1">Cell membrane</location>
        <topology evidence="1">Multi-pass membrane protein</topology>
    </subcellularLocation>
</comment>
<comment type="similarity">
    <text evidence="1">Belongs to the glycosyltransferase 4 family. MraY subfamily.</text>
</comment>
<proteinExistence type="inferred from homology"/>
<evidence type="ECO:0000255" key="1">
    <source>
        <dbReference type="HAMAP-Rule" id="MF_00038"/>
    </source>
</evidence>
<dbReference type="EC" id="2.7.8.13" evidence="1"/>
<dbReference type="EMBL" id="CP000936">
    <property type="protein sequence ID" value="ACA35960.1"/>
    <property type="molecule type" value="Genomic_DNA"/>
</dbReference>
<dbReference type="RefSeq" id="WP_000470792.1">
    <property type="nucleotide sequence ID" value="NC_010380.1"/>
</dbReference>
<dbReference type="SMR" id="B1I956"/>
<dbReference type="KEGG" id="spv:SPH_0447"/>
<dbReference type="HOGENOM" id="CLU_023982_0_1_9"/>
<dbReference type="UniPathway" id="UPA00219"/>
<dbReference type="Proteomes" id="UP000002163">
    <property type="component" value="Chromosome"/>
</dbReference>
<dbReference type="GO" id="GO:0005886">
    <property type="term" value="C:plasma membrane"/>
    <property type="evidence" value="ECO:0007669"/>
    <property type="project" value="UniProtKB-SubCell"/>
</dbReference>
<dbReference type="GO" id="GO:0046872">
    <property type="term" value="F:metal ion binding"/>
    <property type="evidence" value="ECO:0007669"/>
    <property type="project" value="UniProtKB-KW"/>
</dbReference>
<dbReference type="GO" id="GO:0008963">
    <property type="term" value="F:phospho-N-acetylmuramoyl-pentapeptide-transferase activity"/>
    <property type="evidence" value="ECO:0007669"/>
    <property type="project" value="UniProtKB-UniRule"/>
</dbReference>
<dbReference type="GO" id="GO:0051301">
    <property type="term" value="P:cell division"/>
    <property type="evidence" value="ECO:0007669"/>
    <property type="project" value="UniProtKB-KW"/>
</dbReference>
<dbReference type="GO" id="GO:0071555">
    <property type="term" value="P:cell wall organization"/>
    <property type="evidence" value="ECO:0007669"/>
    <property type="project" value="UniProtKB-KW"/>
</dbReference>
<dbReference type="GO" id="GO:0009252">
    <property type="term" value="P:peptidoglycan biosynthetic process"/>
    <property type="evidence" value="ECO:0007669"/>
    <property type="project" value="UniProtKB-UniRule"/>
</dbReference>
<dbReference type="GO" id="GO:0008360">
    <property type="term" value="P:regulation of cell shape"/>
    <property type="evidence" value="ECO:0007669"/>
    <property type="project" value="UniProtKB-KW"/>
</dbReference>
<dbReference type="CDD" id="cd06852">
    <property type="entry name" value="GT_MraY"/>
    <property type="match status" value="1"/>
</dbReference>
<dbReference type="HAMAP" id="MF_00038">
    <property type="entry name" value="MraY"/>
    <property type="match status" value="1"/>
</dbReference>
<dbReference type="InterPro" id="IPR000715">
    <property type="entry name" value="Glycosyl_transferase_4"/>
</dbReference>
<dbReference type="InterPro" id="IPR003524">
    <property type="entry name" value="PNAcMuramoyl-5peptid_Trfase"/>
</dbReference>
<dbReference type="InterPro" id="IPR018480">
    <property type="entry name" value="PNAcMuramoyl-5peptid_Trfase_CS"/>
</dbReference>
<dbReference type="NCBIfam" id="TIGR00445">
    <property type="entry name" value="mraY"/>
    <property type="match status" value="1"/>
</dbReference>
<dbReference type="PANTHER" id="PTHR22926">
    <property type="entry name" value="PHOSPHO-N-ACETYLMURAMOYL-PENTAPEPTIDE-TRANSFERASE"/>
    <property type="match status" value="1"/>
</dbReference>
<dbReference type="PANTHER" id="PTHR22926:SF5">
    <property type="entry name" value="PHOSPHO-N-ACETYLMURAMOYL-PENTAPEPTIDE-TRANSFERASE HOMOLOG"/>
    <property type="match status" value="1"/>
</dbReference>
<dbReference type="Pfam" id="PF00953">
    <property type="entry name" value="Glycos_transf_4"/>
    <property type="match status" value="1"/>
</dbReference>
<dbReference type="Pfam" id="PF10555">
    <property type="entry name" value="MraY_sig1"/>
    <property type="match status" value="1"/>
</dbReference>
<dbReference type="PROSITE" id="PS01347">
    <property type="entry name" value="MRAY_1"/>
    <property type="match status" value="1"/>
</dbReference>
<dbReference type="PROSITE" id="PS01348">
    <property type="entry name" value="MRAY_2"/>
    <property type="match status" value="1"/>
</dbReference>
<reference key="1">
    <citation type="journal article" date="2010" name="Genome Biol.">
        <title>Structure and dynamics of the pan-genome of Streptococcus pneumoniae and closely related species.</title>
        <authorList>
            <person name="Donati C."/>
            <person name="Hiller N.L."/>
            <person name="Tettelin H."/>
            <person name="Muzzi A."/>
            <person name="Croucher N.J."/>
            <person name="Angiuoli S.V."/>
            <person name="Oggioni M."/>
            <person name="Dunning Hotopp J.C."/>
            <person name="Hu F.Z."/>
            <person name="Riley D.R."/>
            <person name="Covacci A."/>
            <person name="Mitchell T.J."/>
            <person name="Bentley S.D."/>
            <person name="Kilian M."/>
            <person name="Ehrlich G.D."/>
            <person name="Rappuoli R."/>
            <person name="Moxon E.R."/>
            <person name="Masignani V."/>
        </authorList>
    </citation>
    <scope>NUCLEOTIDE SEQUENCE [LARGE SCALE GENOMIC DNA]</scope>
    <source>
        <strain>Hungary19A-6</strain>
    </source>
</reference>
<protein>
    <recommendedName>
        <fullName evidence="1">Phospho-N-acetylmuramoyl-pentapeptide-transferase</fullName>
        <ecNumber evidence="1">2.7.8.13</ecNumber>
    </recommendedName>
    <alternativeName>
        <fullName evidence="1">UDP-MurNAc-pentapeptide phosphotransferase</fullName>
    </alternativeName>
</protein>
<feature type="chain" id="PRO_1000090677" description="Phospho-N-acetylmuramoyl-pentapeptide-transferase">
    <location>
        <begin position="1"/>
        <end position="326"/>
    </location>
</feature>
<feature type="transmembrane region" description="Helical" evidence="1">
    <location>
        <begin position="3"/>
        <end position="23"/>
    </location>
</feature>
<feature type="transmembrane region" description="Helical" evidence="1">
    <location>
        <begin position="51"/>
        <end position="71"/>
    </location>
</feature>
<feature type="transmembrane region" description="Helical" evidence="1">
    <location>
        <begin position="79"/>
        <end position="99"/>
    </location>
</feature>
<feature type="transmembrane region" description="Helical" evidence="1">
    <location>
        <begin position="115"/>
        <end position="135"/>
    </location>
</feature>
<feature type="transmembrane region" description="Helical" evidence="1">
    <location>
        <begin position="138"/>
        <end position="158"/>
    </location>
</feature>
<feature type="transmembrane region" description="Helical" evidence="1">
    <location>
        <begin position="169"/>
        <end position="189"/>
    </location>
</feature>
<feature type="transmembrane region" description="Helical" evidence="1">
    <location>
        <begin position="195"/>
        <end position="215"/>
    </location>
</feature>
<feature type="transmembrane region" description="Helical" evidence="1">
    <location>
        <begin position="221"/>
        <end position="243"/>
    </location>
</feature>
<feature type="transmembrane region" description="Helical" evidence="1">
    <location>
        <begin position="304"/>
        <end position="324"/>
    </location>
</feature>
<gene>
    <name evidence="1" type="primary">mraY</name>
    <name type="ordered locus">SPH_0447</name>
</gene>
<sequence>MFISISAGIVTFLLTLVGIPAFIQFYRKAQITGQQMHEDVKQHQAKAGTPTMGGLIFLIAAVVVSFLVALFSKQLTNNVGMILFILVLYGLVGFLDDFLKVFRKINEGLNPKQKLALQLLGGVIFYLFYERGGDMLSIFGYQVHLGIFYIVFALFWLVGFSNAVNLTDGIDGLASISVVISLSAYGVIAYVQGQMDILLVILAMIGGLLGFFVFNHKPAKVFMGDVGSLALGGMLAAISMALHQEWTLLIIGIVYVFETTSVMMQVSYFKLTGGKRIFRMTPVHHHFELGGLSGKGNPWSEWKVDFFFWGVGLLASLLTLAILYLR</sequence>